<evidence type="ECO:0000250" key="1">
    <source>
        <dbReference type="UniProtKB" id="P31649"/>
    </source>
</evidence>
<evidence type="ECO:0000250" key="2">
    <source>
        <dbReference type="UniProtKB" id="Q7K4Y6"/>
    </source>
</evidence>
<evidence type="ECO:0000255" key="3"/>
<evidence type="ECO:0000256" key="4">
    <source>
        <dbReference type="SAM" id="MobiDB-lite"/>
    </source>
</evidence>
<evidence type="ECO:0000305" key="5"/>
<proteinExistence type="evidence at transcript level"/>
<name>S6A13_MACFA</name>
<reference key="1">
    <citation type="submission" date="2005-07" db="EMBL/GenBank/DDBJ databases">
        <title>Analysis of gene expression in cynomolgus monkey tissues by macaque cDNA oligo-chips.</title>
        <authorList>
            <person name="Kobayashi M."/>
            <person name="Tanuma R."/>
            <person name="Hirata M."/>
            <person name="Osada N."/>
            <person name="Kusuda J."/>
            <person name="Sugano S."/>
            <person name="Hashimoto K."/>
        </authorList>
    </citation>
    <scope>NUCLEOTIDE SEQUENCE [LARGE SCALE MRNA]</scope>
    <source>
        <tissue>Brain stem</tissue>
    </source>
</reference>
<gene>
    <name type="primary">SLC6A13</name>
    <name type="ORF">QbsB-10818</name>
</gene>
<organism>
    <name type="scientific">Macaca fascicularis</name>
    <name type="common">Crab-eating macaque</name>
    <name type="synonym">Cynomolgus monkey</name>
    <dbReference type="NCBI Taxonomy" id="9541"/>
    <lineage>
        <taxon>Eukaryota</taxon>
        <taxon>Metazoa</taxon>
        <taxon>Chordata</taxon>
        <taxon>Craniata</taxon>
        <taxon>Vertebrata</taxon>
        <taxon>Euteleostomi</taxon>
        <taxon>Mammalia</taxon>
        <taxon>Eutheria</taxon>
        <taxon>Euarchontoglires</taxon>
        <taxon>Primates</taxon>
        <taxon>Haplorrhini</taxon>
        <taxon>Catarrhini</taxon>
        <taxon>Cercopithecidae</taxon>
        <taxon>Cercopithecinae</taxon>
        <taxon>Macaca</taxon>
    </lineage>
</organism>
<feature type="chain" id="PRO_0000351504" description="Sodium- and chloride-dependent GABA transporter 2">
    <location>
        <begin position="1"/>
        <end position="609"/>
    </location>
</feature>
<feature type="topological domain" description="Cytoplasmic" evidence="3">
    <location>
        <begin position="1"/>
        <end position="40"/>
    </location>
</feature>
<feature type="transmembrane region" description="Helical; Name=1" evidence="3">
    <location>
        <begin position="41"/>
        <end position="61"/>
    </location>
</feature>
<feature type="transmembrane region" description="Helical; Name=2" evidence="3">
    <location>
        <begin position="68"/>
        <end position="88"/>
    </location>
</feature>
<feature type="transmembrane region" description="Helical; Name=3" evidence="3">
    <location>
        <begin position="121"/>
        <end position="141"/>
    </location>
</feature>
<feature type="topological domain" description="Extracellular" evidence="3">
    <location>
        <begin position="142"/>
        <end position="206"/>
    </location>
</feature>
<feature type="transmembrane region" description="Helical; Name=4" evidence="3">
    <location>
        <begin position="207"/>
        <end position="227"/>
    </location>
</feature>
<feature type="transmembrane region" description="Helical; Name=5" evidence="3">
    <location>
        <begin position="233"/>
        <end position="253"/>
    </location>
</feature>
<feature type="transmembrane region" description="Helical; Name=6" evidence="3">
    <location>
        <begin position="282"/>
        <end position="302"/>
    </location>
</feature>
<feature type="transmembrane region" description="Helical; Name=7" evidence="3">
    <location>
        <begin position="319"/>
        <end position="339"/>
    </location>
</feature>
<feature type="transmembrane region" description="Helical; Name=8" evidence="3">
    <location>
        <begin position="366"/>
        <end position="386"/>
    </location>
</feature>
<feature type="transmembrane region" description="Helical; Name=9" evidence="3">
    <location>
        <begin position="418"/>
        <end position="438"/>
    </location>
</feature>
<feature type="transmembrane region" description="Helical; Name=10" evidence="3">
    <location>
        <begin position="453"/>
        <end position="473"/>
    </location>
</feature>
<feature type="transmembrane region" description="Helical; Name=11" evidence="3">
    <location>
        <begin position="490"/>
        <end position="510"/>
    </location>
</feature>
<feature type="transmembrane region" description="Helical; Name=12" evidence="3">
    <location>
        <begin position="528"/>
        <end position="548"/>
    </location>
</feature>
<feature type="topological domain" description="Cytoplasmic" evidence="3">
    <location>
        <begin position="549"/>
        <end position="609"/>
    </location>
</feature>
<feature type="region of interest" description="Disordered" evidence="4">
    <location>
        <begin position="1"/>
        <end position="23"/>
    </location>
</feature>
<feature type="compositionally biased region" description="Polar residues" evidence="4">
    <location>
        <begin position="1"/>
        <end position="13"/>
    </location>
</feature>
<feature type="modified residue" description="Phosphothreonine" evidence="1">
    <location>
        <position position="594"/>
    </location>
</feature>
<feature type="modified residue" description="Phosphoserine" evidence="1">
    <location>
        <position position="598"/>
    </location>
</feature>
<feature type="glycosylation site" description="N-linked (GlcNAc...) asparagine" evidence="3">
    <location>
        <position position="169"/>
    </location>
</feature>
<feature type="glycosylation site" description="N-linked (GlcNAc...) asparagine" evidence="3">
    <location>
        <position position="173"/>
    </location>
</feature>
<feature type="glycosylation site" description="N-linked (GlcNAc...) asparagine" evidence="3">
    <location>
        <position position="269"/>
    </location>
</feature>
<feature type="disulfide bond" evidence="2">
    <location>
        <begin position="153"/>
        <end position="162"/>
    </location>
</feature>
<protein>
    <recommendedName>
        <fullName>Sodium- and chloride-dependent GABA transporter 2</fullName>
        <shortName>GAT-2</shortName>
    </recommendedName>
    <alternativeName>
        <fullName>Solute carrier family 6 member 13</fullName>
    </alternativeName>
</protein>
<dbReference type="EMBL" id="AB220382">
    <property type="protein sequence ID" value="BAE72915.1"/>
    <property type="molecule type" value="mRNA"/>
</dbReference>
<dbReference type="SMR" id="Q2PG55"/>
<dbReference type="STRING" id="9541.ENSMFAP00000001446"/>
<dbReference type="GlyCosmos" id="Q2PG55">
    <property type="glycosylation" value="3 sites, No reported glycans"/>
</dbReference>
<dbReference type="Ensembl" id="ENSMFAT00000029624.2">
    <property type="protein sequence ID" value="ENSMFAP00000001446.2"/>
    <property type="gene ID" value="ENSMFAG00000038990.2"/>
</dbReference>
<dbReference type="eggNOG" id="KOG3660">
    <property type="taxonomic scope" value="Eukaryota"/>
</dbReference>
<dbReference type="GeneTree" id="ENSGT00940000157478"/>
<dbReference type="Proteomes" id="UP000233100">
    <property type="component" value="Chromosome 11"/>
</dbReference>
<dbReference type="Bgee" id="ENSMFAG00000038990">
    <property type="expression patterns" value="Expressed in adult mammalian kidney and 12 other cell types or tissues"/>
</dbReference>
<dbReference type="GO" id="GO:0016323">
    <property type="term" value="C:basolateral plasma membrane"/>
    <property type="evidence" value="ECO:0007669"/>
    <property type="project" value="UniProtKB-SubCell"/>
</dbReference>
<dbReference type="GO" id="GO:0042995">
    <property type="term" value="C:cell projection"/>
    <property type="evidence" value="ECO:0007669"/>
    <property type="project" value="TreeGrafter"/>
</dbReference>
<dbReference type="GO" id="GO:0005332">
    <property type="term" value="F:gamma-aminobutyric acid:sodium:chloride symporter activity"/>
    <property type="evidence" value="ECO:0007669"/>
    <property type="project" value="Ensembl"/>
</dbReference>
<dbReference type="GO" id="GO:0089718">
    <property type="term" value="P:amino acid import across plasma membrane"/>
    <property type="evidence" value="ECO:0007669"/>
    <property type="project" value="Ensembl"/>
</dbReference>
<dbReference type="GO" id="GO:0006836">
    <property type="term" value="P:neurotransmitter transport"/>
    <property type="evidence" value="ECO:0007669"/>
    <property type="project" value="UniProtKB-KW"/>
</dbReference>
<dbReference type="CDD" id="cd11507">
    <property type="entry name" value="SLC6sbd_GAT2"/>
    <property type="match status" value="1"/>
</dbReference>
<dbReference type="InterPro" id="IPR000175">
    <property type="entry name" value="Na/ntran_symport"/>
</dbReference>
<dbReference type="InterPro" id="IPR002981">
    <property type="entry name" value="Na/ntran_symport_GABA_GAT2"/>
</dbReference>
<dbReference type="InterPro" id="IPR037272">
    <property type="entry name" value="SNS_sf"/>
</dbReference>
<dbReference type="NCBIfam" id="NF037979">
    <property type="entry name" value="Na_transp"/>
    <property type="match status" value="1"/>
</dbReference>
<dbReference type="PANTHER" id="PTHR11616:SF111">
    <property type="entry name" value="SODIUM- AND CHLORIDE-DEPENDENT GABA TRANSPORTER 2"/>
    <property type="match status" value="1"/>
</dbReference>
<dbReference type="PANTHER" id="PTHR11616">
    <property type="entry name" value="SODIUM/CHLORIDE DEPENDENT TRANSPORTER"/>
    <property type="match status" value="1"/>
</dbReference>
<dbReference type="Pfam" id="PF00209">
    <property type="entry name" value="SNF"/>
    <property type="match status" value="1"/>
</dbReference>
<dbReference type="PRINTS" id="PR01196">
    <property type="entry name" value="GAT2TRNSPORT"/>
</dbReference>
<dbReference type="PRINTS" id="PR00176">
    <property type="entry name" value="NANEUSMPORT"/>
</dbReference>
<dbReference type="SUPFAM" id="SSF161070">
    <property type="entry name" value="SNF-like"/>
    <property type="match status" value="1"/>
</dbReference>
<dbReference type="PROSITE" id="PS00610">
    <property type="entry name" value="NA_NEUROTRAN_SYMP_1"/>
    <property type="match status" value="1"/>
</dbReference>
<dbReference type="PROSITE" id="PS00754">
    <property type="entry name" value="NA_NEUROTRAN_SYMP_2"/>
    <property type="match status" value="1"/>
</dbReference>
<dbReference type="PROSITE" id="PS50267">
    <property type="entry name" value="NA_NEUROTRAN_SYMP_3"/>
    <property type="match status" value="1"/>
</dbReference>
<accession>Q2PG55</accession>
<comment type="function">
    <text evidence="1">Mediates sodium- and chloride-dependent transport of gamma-aminobutyric acid (GABA) (By similarity). Can also mediate transport of beta-alanine, taurine and hypotaurine (By similarity).</text>
</comment>
<comment type="catalytic activity">
    <reaction evidence="1">
        <text>4-aminobutanoate(out) + chloride(out) + 2 Na(+)(out) = 4-aminobutanoate(in) + chloride(in) + 2 Na(+)(in)</text>
        <dbReference type="Rhea" id="RHEA:70687"/>
        <dbReference type="ChEBI" id="CHEBI:17996"/>
        <dbReference type="ChEBI" id="CHEBI:29101"/>
        <dbReference type="ChEBI" id="CHEBI:59888"/>
    </reaction>
    <physiologicalReaction direction="left-to-right" evidence="1">
        <dbReference type="Rhea" id="RHEA:70688"/>
    </physiologicalReaction>
</comment>
<comment type="catalytic activity">
    <reaction evidence="1">
        <text>taurine(out) + chloride(out) + 2 Na(+)(out) = taurine(in) + chloride(in) + 2 Na(+)(in)</text>
        <dbReference type="Rhea" id="RHEA:71223"/>
        <dbReference type="ChEBI" id="CHEBI:17996"/>
        <dbReference type="ChEBI" id="CHEBI:29101"/>
        <dbReference type="ChEBI" id="CHEBI:507393"/>
    </reaction>
    <physiologicalReaction direction="left-to-right" evidence="1">
        <dbReference type="Rhea" id="RHEA:71224"/>
    </physiologicalReaction>
</comment>
<comment type="catalytic activity">
    <reaction evidence="1">
        <text>beta-alanine(out) + chloride(out) + 2 Na(+)(out) = beta-alanine(in) + chloride(in) + 2 Na(+)(in)</text>
        <dbReference type="Rhea" id="RHEA:71247"/>
        <dbReference type="ChEBI" id="CHEBI:17996"/>
        <dbReference type="ChEBI" id="CHEBI:29101"/>
        <dbReference type="ChEBI" id="CHEBI:57966"/>
    </reaction>
    <physiologicalReaction direction="left-to-right" evidence="1">
        <dbReference type="Rhea" id="RHEA:71248"/>
    </physiologicalReaction>
</comment>
<comment type="catalytic activity">
    <reaction evidence="1">
        <text>hypotaurine(out) + chloride(out) + 2 Na(+)(out) = hypotaurine(in) + chloride(in) + 2 Na(+)(in)</text>
        <dbReference type="Rhea" id="RHEA:71243"/>
        <dbReference type="ChEBI" id="CHEBI:17996"/>
        <dbReference type="ChEBI" id="CHEBI:29101"/>
        <dbReference type="ChEBI" id="CHEBI:57853"/>
    </reaction>
    <physiologicalReaction direction="left-to-right" evidence="1">
        <dbReference type="Rhea" id="RHEA:71244"/>
    </physiologicalReaction>
</comment>
<comment type="subcellular location">
    <subcellularLocation>
        <location evidence="1">Cell membrane</location>
        <topology evidence="3">Multi-pass membrane protein</topology>
    </subcellularLocation>
    <subcellularLocation>
        <location evidence="1">Basolateral cell membrane</location>
        <topology evidence="3">Multi-pass membrane protein</topology>
    </subcellularLocation>
</comment>
<comment type="similarity">
    <text evidence="5">Belongs to the sodium:neurotransmitter symporter (SNF) (TC 2.A.22) family. SLC6A13 subfamily.</text>
</comment>
<keyword id="KW-1003">Cell membrane</keyword>
<keyword id="KW-1015">Disulfide bond</keyword>
<keyword id="KW-0325">Glycoprotein</keyword>
<keyword id="KW-0472">Membrane</keyword>
<keyword id="KW-0532">Neurotransmitter transport</keyword>
<keyword id="KW-0597">Phosphoprotein</keyword>
<keyword id="KW-1185">Reference proteome</keyword>
<keyword id="KW-0769">Symport</keyword>
<keyword id="KW-0812">Transmembrane</keyword>
<keyword id="KW-1133">Transmembrane helix</keyword>
<keyword id="KW-0813">Transport</keyword>
<sequence>MDSRASGTASNGETKPVYPVMEKEEEEGTLERGHWNNKMEFVLSVAGEIIGLGNVWRFPYLCYKNGGGAFFIPYLVFLFTCGVPVFLLETALGQYTSQGGVTAWRKICPIFEGIGYASQMIVILLNVYYIIVLAWALFYLFSSFTIDLPWGGCHHEWNTEHCVEFQKTNGSLNGTSENATSPVIEFWERRVLKISDGIQHLGALRWELALCLLLAWVICYFCIWKGVKSTGKVVYFTATFPYLMLVVLLIRGVTLPGAAQGIQFYLYPNLTRLWDPQVWMDAGTQIFFSFAICLGCLTALGSYNKYHNNCYRDCLALCFLNSGTSFVAGFAIFSILGFMSQEQGVPISEVAESGPGLAFIAYPRAVVMLPFSPLWACCFFFMVVLLGLDSQFVCVESLVTALVDMYPRVFRKKNRREVLILGVSVVSFLVGLVMLTEGGMYVFQLFDYYAASGMCLLFVAIFESLCVAWVYGARRFYDNIEDMIGYRPWPLIKYCWLFLTPAVCTATFLFSLIKYTPLTYNKKYTYPWWGDALGWLLALSSMVCIPAWSLYRLGTLKGPFREPPPRSLQRIRQLMCPAEDLPQRNPAGPSAPATPRTSLLRLTELESHC</sequence>